<feature type="chain" id="PRO_1000022995" description="Shikimate kinase">
    <location>
        <begin position="1"/>
        <end position="171"/>
    </location>
</feature>
<feature type="binding site" evidence="1">
    <location>
        <begin position="14"/>
        <end position="19"/>
    </location>
    <ligand>
        <name>ATP</name>
        <dbReference type="ChEBI" id="CHEBI:30616"/>
    </ligand>
</feature>
<feature type="binding site" evidence="1">
    <location>
        <position position="18"/>
    </location>
    <ligand>
        <name>Mg(2+)</name>
        <dbReference type="ChEBI" id="CHEBI:18420"/>
    </ligand>
</feature>
<feature type="binding site" evidence="1">
    <location>
        <position position="36"/>
    </location>
    <ligand>
        <name>substrate</name>
    </ligand>
</feature>
<feature type="binding site" evidence="1">
    <location>
        <position position="60"/>
    </location>
    <ligand>
        <name>substrate</name>
    </ligand>
</feature>
<feature type="binding site" evidence="1">
    <location>
        <position position="82"/>
    </location>
    <ligand>
        <name>substrate</name>
    </ligand>
</feature>
<feature type="binding site" evidence="1">
    <location>
        <position position="120"/>
    </location>
    <ligand>
        <name>ATP</name>
        <dbReference type="ChEBI" id="CHEBI:30616"/>
    </ligand>
</feature>
<feature type="binding site" evidence="1">
    <location>
        <position position="139"/>
    </location>
    <ligand>
        <name>substrate</name>
    </ligand>
</feature>
<feature type="binding site" evidence="1">
    <location>
        <position position="156"/>
    </location>
    <ligand>
        <name>ATP</name>
        <dbReference type="ChEBI" id="CHEBI:30616"/>
    </ligand>
</feature>
<sequence>MAEKRNIFLVGPMGAGKSTIGRHLAQLLHLEFHDSDHEIEQRTGADIAWVFDVEGEEGFRRREAQVIADLSEKQGIVLATGGGSVQSKDIRNHLSARGIVVYLETTIDKQVARTQRDKRRPLLQVDDPREVLENLAETRNPLYEEIADVIVKTDEQSAKIVANQIIEQLGF</sequence>
<name>AROK_SHEDO</name>
<organism>
    <name type="scientific">Shewanella denitrificans (strain OS217 / ATCC BAA-1090 / DSM 15013)</name>
    <dbReference type="NCBI Taxonomy" id="318161"/>
    <lineage>
        <taxon>Bacteria</taxon>
        <taxon>Pseudomonadati</taxon>
        <taxon>Pseudomonadota</taxon>
        <taxon>Gammaproteobacteria</taxon>
        <taxon>Alteromonadales</taxon>
        <taxon>Shewanellaceae</taxon>
        <taxon>Shewanella</taxon>
    </lineage>
</organism>
<proteinExistence type="inferred from homology"/>
<reference key="1">
    <citation type="submission" date="2006-03" db="EMBL/GenBank/DDBJ databases">
        <title>Complete sequence of Shewanella denitrificans OS217.</title>
        <authorList>
            <consortium name="US DOE Joint Genome Institute"/>
            <person name="Copeland A."/>
            <person name="Lucas S."/>
            <person name="Lapidus A."/>
            <person name="Barry K."/>
            <person name="Detter J.C."/>
            <person name="Glavina del Rio T."/>
            <person name="Hammon N."/>
            <person name="Israni S."/>
            <person name="Dalin E."/>
            <person name="Tice H."/>
            <person name="Pitluck S."/>
            <person name="Brettin T."/>
            <person name="Bruce D."/>
            <person name="Han C."/>
            <person name="Tapia R."/>
            <person name="Gilna P."/>
            <person name="Kiss H."/>
            <person name="Schmutz J."/>
            <person name="Larimer F."/>
            <person name="Land M."/>
            <person name="Hauser L."/>
            <person name="Kyrpides N."/>
            <person name="Lykidis A."/>
            <person name="Richardson P."/>
        </authorList>
    </citation>
    <scope>NUCLEOTIDE SEQUENCE [LARGE SCALE GENOMIC DNA]</scope>
    <source>
        <strain>OS217 / ATCC BAA-1090 / DSM 15013</strain>
    </source>
</reference>
<comment type="function">
    <text evidence="1">Catalyzes the specific phosphorylation of the 3-hydroxyl group of shikimic acid using ATP as a cosubstrate.</text>
</comment>
<comment type="catalytic activity">
    <reaction evidence="1">
        <text>shikimate + ATP = 3-phosphoshikimate + ADP + H(+)</text>
        <dbReference type="Rhea" id="RHEA:13121"/>
        <dbReference type="ChEBI" id="CHEBI:15378"/>
        <dbReference type="ChEBI" id="CHEBI:30616"/>
        <dbReference type="ChEBI" id="CHEBI:36208"/>
        <dbReference type="ChEBI" id="CHEBI:145989"/>
        <dbReference type="ChEBI" id="CHEBI:456216"/>
        <dbReference type="EC" id="2.7.1.71"/>
    </reaction>
</comment>
<comment type="cofactor">
    <cofactor evidence="1">
        <name>Mg(2+)</name>
        <dbReference type="ChEBI" id="CHEBI:18420"/>
    </cofactor>
    <text evidence="1">Binds 1 Mg(2+) ion per subunit.</text>
</comment>
<comment type="pathway">
    <text evidence="1">Metabolic intermediate biosynthesis; chorismate biosynthesis; chorismate from D-erythrose 4-phosphate and phosphoenolpyruvate: step 5/7.</text>
</comment>
<comment type="subunit">
    <text evidence="1">Monomer.</text>
</comment>
<comment type="subcellular location">
    <subcellularLocation>
        <location evidence="1">Cytoplasm</location>
    </subcellularLocation>
</comment>
<comment type="similarity">
    <text evidence="1">Belongs to the shikimate kinase family.</text>
</comment>
<protein>
    <recommendedName>
        <fullName evidence="1">Shikimate kinase</fullName>
        <shortName evidence="1">SK</shortName>
        <ecNumber evidence="1">2.7.1.71</ecNumber>
    </recommendedName>
</protein>
<evidence type="ECO:0000255" key="1">
    <source>
        <dbReference type="HAMAP-Rule" id="MF_00109"/>
    </source>
</evidence>
<keyword id="KW-0028">Amino-acid biosynthesis</keyword>
<keyword id="KW-0057">Aromatic amino acid biosynthesis</keyword>
<keyword id="KW-0067">ATP-binding</keyword>
<keyword id="KW-0963">Cytoplasm</keyword>
<keyword id="KW-0418">Kinase</keyword>
<keyword id="KW-0460">Magnesium</keyword>
<keyword id="KW-0479">Metal-binding</keyword>
<keyword id="KW-0547">Nucleotide-binding</keyword>
<keyword id="KW-1185">Reference proteome</keyword>
<keyword id="KW-0808">Transferase</keyword>
<dbReference type="EC" id="2.7.1.71" evidence="1"/>
<dbReference type="EMBL" id="CP000302">
    <property type="protein sequence ID" value="ABE53557.1"/>
    <property type="molecule type" value="Genomic_DNA"/>
</dbReference>
<dbReference type="RefSeq" id="WP_011494724.1">
    <property type="nucleotide sequence ID" value="NC_007954.1"/>
</dbReference>
<dbReference type="SMR" id="Q12SL9"/>
<dbReference type="STRING" id="318161.Sden_0261"/>
<dbReference type="KEGG" id="sdn:Sden_0261"/>
<dbReference type="eggNOG" id="COG0703">
    <property type="taxonomic scope" value="Bacteria"/>
</dbReference>
<dbReference type="HOGENOM" id="CLU_057607_2_2_6"/>
<dbReference type="OrthoDB" id="9800332at2"/>
<dbReference type="UniPathway" id="UPA00053">
    <property type="reaction ID" value="UER00088"/>
</dbReference>
<dbReference type="Proteomes" id="UP000001982">
    <property type="component" value="Chromosome"/>
</dbReference>
<dbReference type="GO" id="GO:0005829">
    <property type="term" value="C:cytosol"/>
    <property type="evidence" value="ECO:0007669"/>
    <property type="project" value="TreeGrafter"/>
</dbReference>
<dbReference type="GO" id="GO:0005524">
    <property type="term" value="F:ATP binding"/>
    <property type="evidence" value="ECO:0007669"/>
    <property type="project" value="UniProtKB-UniRule"/>
</dbReference>
<dbReference type="GO" id="GO:0000287">
    <property type="term" value="F:magnesium ion binding"/>
    <property type="evidence" value="ECO:0007669"/>
    <property type="project" value="UniProtKB-UniRule"/>
</dbReference>
<dbReference type="GO" id="GO:0004765">
    <property type="term" value="F:shikimate kinase activity"/>
    <property type="evidence" value="ECO:0007669"/>
    <property type="project" value="UniProtKB-UniRule"/>
</dbReference>
<dbReference type="GO" id="GO:0008652">
    <property type="term" value="P:amino acid biosynthetic process"/>
    <property type="evidence" value="ECO:0007669"/>
    <property type="project" value="UniProtKB-KW"/>
</dbReference>
<dbReference type="GO" id="GO:0009073">
    <property type="term" value="P:aromatic amino acid family biosynthetic process"/>
    <property type="evidence" value="ECO:0007669"/>
    <property type="project" value="UniProtKB-KW"/>
</dbReference>
<dbReference type="GO" id="GO:0009423">
    <property type="term" value="P:chorismate biosynthetic process"/>
    <property type="evidence" value="ECO:0007669"/>
    <property type="project" value="UniProtKB-UniRule"/>
</dbReference>
<dbReference type="CDD" id="cd00464">
    <property type="entry name" value="SK"/>
    <property type="match status" value="1"/>
</dbReference>
<dbReference type="FunFam" id="3.40.50.300:FF:000099">
    <property type="entry name" value="Shikimate kinase 1"/>
    <property type="match status" value="1"/>
</dbReference>
<dbReference type="Gene3D" id="3.40.50.300">
    <property type="entry name" value="P-loop containing nucleotide triphosphate hydrolases"/>
    <property type="match status" value="1"/>
</dbReference>
<dbReference type="HAMAP" id="MF_00109">
    <property type="entry name" value="Shikimate_kinase"/>
    <property type="match status" value="1"/>
</dbReference>
<dbReference type="InterPro" id="IPR027417">
    <property type="entry name" value="P-loop_NTPase"/>
</dbReference>
<dbReference type="InterPro" id="IPR031322">
    <property type="entry name" value="Shikimate/glucono_kinase"/>
</dbReference>
<dbReference type="InterPro" id="IPR000623">
    <property type="entry name" value="Shikimate_kinase/TSH1"/>
</dbReference>
<dbReference type="InterPro" id="IPR023000">
    <property type="entry name" value="Shikimate_kinase_CS"/>
</dbReference>
<dbReference type="NCBIfam" id="NF003456">
    <property type="entry name" value="PRK05057.1"/>
    <property type="match status" value="1"/>
</dbReference>
<dbReference type="PANTHER" id="PTHR21087">
    <property type="entry name" value="SHIKIMATE KINASE"/>
    <property type="match status" value="1"/>
</dbReference>
<dbReference type="PANTHER" id="PTHR21087:SF16">
    <property type="entry name" value="SHIKIMATE KINASE 1, CHLOROPLASTIC"/>
    <property type="match status" value="1"/>
</dbReference>
<dbReference type="Pfam" id="PF01202">
    <property type="entry name" value="SKI"/>
    <property type="match status" value="1"/>
</dbReference>
<dbReference type="PRINTS" id="PR01100">
    <property type="entry name" value="SHIKIMTKNASE"/>
</dbReference>
<dbReference type="SUPFAM" id="SSF52540">
    <property type="entry name" value="P-loop containing nucleoside triphosphate hydrolases"/>
    <property type="match status" value="1"/>
</dbReference>
<dbReference type="PROSITE" id="PS01128">
    <property type="entry name" value="SHIKIMATE_KINASE"/>
    <property type="match status" value="1"/>
</dbReference>
<gene>
    <name evidence="1" type="primary">aroK</name>
    <name type="ordered locus">Sden_0261</name>
</gene>
<accession>Q12SL9</accession>